<feature type="chain" id="PRO_0000105900" description="UPF0344 protein SERP0557">
    <location>
        <begin position="1"/>
        <end position="133"/>
    </location>
</feature>
<feature type="transmembrane region" description="Helical" evidence="1">
    <location>
        <begin position="1"/>
        <end position="21"/>
    </location>
</feature>
<feature type="transmembrane region" description="Helical" evidence="1">
    <location>
        <begin position="42"/>
        <end position="62"/>
    </location>
</feature>
<feature type="transmembrane region" description="Helical" evidence="1">
    <location>
        <begin position="71"/>
        <end position="91"/>
    </location>
</feature>
<feature type="transmembrane region" description="Helical" evidence="1">
    <location>
        <begin position="103"/>
        <end position="123"/>
    </location>
</feature>
<keyword id="KW-1003">Cell membrane</keyword>
<keyword id="KW-0472">Membrane</keyword>
<keyword id="KW-1185">Reference proteome</keyword>
<keyword id="KW-0812">Transmembrane</keyword>
<keyword id="KW-1133">Transmembrane helix</keyword>
<dbReference type="EMBL" id="CP000029">
    <property type="protein sequence ID" value="AAW53936.1"/>
    <property type="molecule type" value="Genomic_DNA"/>
</dbReference>
<dbReference type="RefSeq" id="WP_001831989.1">
    <property type="nucleotide sequence ID" value="NC_002976.3"/>
</dbReference>
<dbReference type="SMR" id="Q5HQJ2"/>
<dbReference type="STRING" id="176279.SERP0557"/>
<dbReference type="KEGG" id="ser:SERP0557"/>
<dbReference type="eggNOG" id="ENOG5033A1U">
    <property type="taxonomic scope" value="Bacteria"/>
</dbReference>
<dbReference type="HOGENOM" id="CLU_146641_2_0_9"/>
<dbReference type="Proteomes" id="UP000000531">
    <property type="component" value="Chromosome"/>
</dbReference>
<dbReference type="GO" id="GO:0005886">
    <property type="term" value="C:plasma membrane"/>
    <property type="evidence" value="ECO:0007669"/>
    <property type="project" value="UniProtKB-SubCell"/>
</dbReference>
<dbReference type="HAMAP" id="MF_01536">
    <property type="entry name" value="UPF0344"/>
    <property type="match status" value="1"/>
</dbReference>
<dbReference type="InterPro" id="IPR010899">
    <property type="entry name" value="UPF0344"/>
</dbReference>
<dbReference type="NCBIfam" id="NF010195">
    <property type="entry name" value="PRK13673.1-2"/>
    <property type="match status" value="1"/>
</dbReference>
<dbReference type="NCBIfam" id="NF010199">
    <property type="entry name" value="PRK13673.1-6"/>
    <property type="match status" value="1"/>
</dbReference>
<dbReference type="Pfam" id="PF07457">
    <property type="entry name" value="DUF1516"/>
    <property type="match status" value="1"/>
</dbReference>
<evidence type="ECO:0000255" key="1">
    <source>
        <dbReference type="HAMAP-Rule" id="MF_01536"/>
    </source>
</evidence>
<protein>
    <recommendedName>
        <fullName evidence="1">UPF0344 protein SERP0557</fullName>
    </recommendedName>
</protein>
<proteinExistence type="inferred from homology"/>
<comment type="subcellular location">
    <subcellularLocation>
        <location evidence="1">Cell membrane</location>
        <topology evidence="1">Multi-pass membrane protein</topology>
    </subcellularLocation>
</comment>
<comment type="similarity">
    <text evidence="1">Belongs to the UPF0344 family.</text>
</comment>
<gene>
    <name type="ordered locus">SERP0557</name>
</gene>
<name>Y557_STAEQ</name>
<accession>Q5HQJ2</accession>
<sequence>MLHVHILSWVLAIILFIATYLNYSKTQGASPYYKPLHMALRLFMLLTLISGFWELIEEFMAASNGEGGNHMLLTLKMLCGLAVIAFMEISIAKRKKQQTSHKFFWITIILIIITMAIGVILPWGPISKIFGIS</sequence>
<reference key="1">
    <citation type="journal article" date="2005" name="J. Bacteriol.">
        <title>Insights on evolution of virulence and resistance from the complete genome analysis of an early methicillin-resistant Staphylococcus aureus strain and a biofilm-producing methicillin-resistant Staphylococcus epidermidis strain.</title>
        <authorList>
            <person name="Gill S.R."/>
            <person name="Fouts D.E."/>
            <person name="Archer G.L."/>
            <person name="Mongodin E.F."/>
            <person name="DeBoy R.T."/>
            <person name="Ravel J."/>
            <person name="Paulsen I.T."/>
            <person name="Kolonay J.F."/>
            <person name="Brinkac L.M."/>
            <person name="Beanan M.J."/>
            <person name="Dodson R.J."/>
            <person name="Daugherty S.C."/>
            <person name="Madupu R."/>
            <person name="Angiuoli S.V."/>
            <person name="Durkin A.S."/>
            <person name="Haft D.H."/>
            <person name="Vamathevan J.J."/>
            <person name="Khouri H."/>
            <person name="Utterback T.R."/>
            <person name="Lee C."/>
            <person name="Dimitrov G."/>
            <person name="Jiang L."/>
            <person name="Qin H."/>
            <person name="Weidman J."/>
            <person name="Tran K."/>
            <person name="Kang K.H."/>
            <person name="Hance I.R."/>
            <person name="Nelson K.E."/>
            <person name="Fraser C.M."/>
        </authorList>
    </citation>
    <scope>NUCLEOTIDE SEQUENCE [LARGE SCALE GENOMIC DNA]</scope>
    <source>
        <strain>ATCC 35984 / DSM 28319 / BCRC 17069 / CCUG 31568 / BM 3577 / RP62A</strain>
    </source>
</reference>
<organism>
    <name type="scientific">Staphylococcus epidermidis (strain ATCC 35984 / DSM 28319 / BCRC 17069 / CCUG 31568 / BM 3577 / RP62A)</name>
    <dbReference type="NCBI Taxonomy" id="176279"/>
    <lineage>
        <taxon>Bacteria</taxon>
        <taxon>Bacillati</taxon>
        <taxon>Bacillota</taxon>
        <taxon>Bacilli</taxon>
        <taxon>Bacillales</taxon>
        <taxon>Staphylococcaceae</taxon>
        <taxon>Staphylococcus</taxon>
    </lineage>
</organism>